<accession>D1BTU8</accession>
<feature type="chain" id="PRO_0000412872" description="Sec-independent protein translocase protein TatC">
    <location>
        <begin position="1"/>
        <end position="276"/>
    </location>
</feature>
<feature type="transmembrane region" description="Helical" evidence="1">
    <location>
        <begin position="49"/>
        <end position="69"/>
    </location>
</feature>
<feature type="transmembrane region" description="Helical" evidence="1">
    <location>
        <begin position="103"/>
        <end position="123"/>
    </location>
</feature>
<feature type="transmembrane region" description="Helical" evidence="1">
    <location>
        <begin position="136"/>
        <end position="156"/>
    </location>
</feature>
<feature type="transmembrane region" description="Helical" evidence="1">
    <location>
        <begin position="187"/>
        <end position="207"/>
    </location>
</feature>
<feature type="transmembrane region" description="Helical" evidence="1">
    <location>
        <begin position="221"/>
        <end position="241"/>
    </location>
</feature>
<feature type="transmembrane region" description="Helical" evidence="1">
    <location>
        <begin position="242"/>
        <end position="262"/>
    </location>
</feature>
<feature type="region of interest" description="Disordered" evidence="2">
    <location>
        <begin position="1"/>
        <end position="29"/>
    </location>
</feature>
<proteinExistence type="inferred from homology"/>
<reference key="1">
    <citation type="submission" date="2009-11" db="EMBL/GenBank/DDBJ databases">
        <title>The complete chromosome of Xylanimonas cellulosilytica DSM 15894.</title>
        <authorList>
            <consortium name="US DOE Joint Genome Institute (JGI-PGF)"/>
            <person name="Lucas S."/>
            <person name="Copeland A."/>
            <person name="Lapidus A."/>
            <person name="Glavina del Rio T."/>
            <person name="Dalin E."/>
            <person name="Tice H."/>
            <person name="Bruce D."/>
            <person name="Goodwin L."/>
            <person name="Pitluck S."/>
            <person name="Kyrpides N."/>
            <person name="Mavromatis K."/>
            <person name="Ivanova N."/>
            <person name="Mikhailova N."/>
            <person name="Foster B."/>
            <person name="Clum A."/>
            <person name="Brettin T."/>
            <person name="Detter J.C."/>
            <person name="Han C."/>
            <person name="Larimer F."/>
            <person name="Land M."/>
            <person name="Hauser L."/>
            <person name="Markowitz V."/>
            <person name="Cheng J.F."/>
            <person name="Hugenholtz P."/>
            <person name="Woyke T."/>
            <person name="Wu D."/>
            <person name="Gehrich-Schroeter G."/>
            <person name="Schneider S."/>
            <person name="Pukall S.R."/>
            <person name="Klenk H.P."/>
            <person name="Eisen J.A."/>
        </authorList>
    </citation>
    <scope>NUCLEOTIDE SEQUENCE [LARGE SCALE GENOMIC DNA]</scope>
    <source>
        <strain>DSM 15894 / JCM 12276 / CECT 5975 / KCTC 9989 / LMG 20990 / NBRC 107835 / XIL07</strain>
    </source>
</reference>
<evidence type="ECO:0000255" key="1">
    <source>
        <dbReference type="HAMAP-Rule" id="MF_00902"/>
    </source>
</evidence>
<evidence type="ECO:0000256" key="2">
    <source>
        <dbReference type="SAM" id="MobiDB-lite"/>
    </source>
</evidence>
<dbReference type="EMBL" id="CP001821">
    <property type="protein sequence ID" value="ACZ29112.1"/>
    <property type="molecule type" value="Genomic_DNA"/>
</dbReference>
<dbReference type="RefSeq" id="WP_012876857.1">
    <property type="nucleotide sequence ID" value="NC_013530.1"/>
</dbReference>
<dbReference type="SMR" id="D1BTU8"/>
<dbReference type="STRING" id="446471.Xcel_0071"/>
<dbReference type="KEGG" id="xce:Xcel_0071"/>
<dbReference type="eggNOG" id="COG0805">
    <property type="taxonomic scope" value="Bacteria"/>
</dbReference>
<dbReference type="HOGENOM" id="CLU_031942_6_0_11"/>
<dbReference type="OrthoDB" id="9777044at2"/>
<dbReference type="Proteomes" id="UP000002255">
    <property type="component" value="Chromosome"/>
</dbReference>
<dbReference type="GO" id="GO:0033281">
    <property type="term" value="C:TAT protein transport complex"/>
    <property type="evidence" value="ECO:0007669"/>
    <property type="project" value="UniProtKB-UniRule"/>
</dbReference>
<dbReference type="GO" id="GO:0009977">
    <property type="term" value="F:proton motive force dependent protein transmembrane transporter activity"/>
    <property type="evidence" value="ECO:0007669"/>
    <property type="project" value="TreeGrafter"/>
</dbReference>
<dbReference type="GO" id="GO:0065002">
    <property type="term" value="P:intracellular protein transmembrane transport"/>
    <property type="evidence" value="ECO:0007669"/>
    <property type="project" value="TreeGrafter"/>
</dbReference>
<dbReference type="GO" id="GO:0043953">
    <property type="term" value="P:protein transport by the Tat complex"/>
    <property type="evidence" value="ECO:0007669"/>
    <property type="project" value="UniProtKB-UniRule"/>
</dbReference>
<dbReference type="HAMAP" id="MF_00902">
    <property type="entry name" value="TatC"/>
    <property type="match status" value="1"/>
</dbReference>
<dbReference type="InterPro" id="IPR002033">
    <property type="entry name" value="TatC"/>
</dbReference>
<dbReference type="NCBIfam" id="TIGR00945">
    <property type="entry name" value="tatC"/>
    <property type="match status" value="1"/>
</dbReference>
<dbReference type="PANTHER" id="PTHR30371">
    <property type="entry name" value="SEC-INDEPENDENT PROTEIN TRANSLOCASE PROTEIN TATC"/>
    <property type="match status" value="1"/>
</dbReference>
<dbReference type="PANTHER" id="PTHR30371:SF0">
    <property type="entry name" value="SEC-INDEPENDENT PROTEIN TRANSLOCASE PROTEIN TATC, CHLOROPLASTIC-RELATED"/>
    <property type="match status" value="1"/>
</dbReference>
<dbReference type="Pfam" id="PF00902">
    <property type="entry name" value="TatC"/>
    <property type="match status" value="1"/>
</dbReference>
<dbReference type="PRINTS" id="PR01840">
    <property type="entry name" value="TATCFAMILY"/>
</dbReference>
<sequence>MVSLTSVPPYADATPDTRASSGPAPGRRKRMPLREHLAELRTRLLLVAGGLVVGAVVGWLLYDPLLVLLTRPLHLAAATQHKDIALNFTALGSPLDTRIKVSLFLAVMVTCPWWLYQVWAFVTPGLTRREKRHAYGFLGAAVPLFLGGAGLSWWVLPHAVDIFASFVPAGSSQYVNAQEYLSFVMRLVLAFGVAFVAPVLLVALNLAGIVRHETLARGWRWAVLLAFVFAAVMTPTPDALTMVLVAAPICALYFGALGVAVWHDRRADRRTAPAAA</sequence>
<comment type="function">
    <text evidence="1">Part of the twin-arginine translocation (Tat) system that transports large folded proteins containing a characteristic twin-arginine motif in their signal peptide across membranes. Together with TatB, TatC is part of a receptor directly interacting with Tat signal peptides.</text>
</comment>
<comment type="subunit">
    <text evidence="1">The Tat system comprises two distinct complexes: a TatABC complex, containing multiple copies of TatA, TatB and TatC subunits, and a separate TatA complex, containing only TatA subunits. Substrates initially bind to the TatABC complex, which probably triggers association of the separate TatA complex to form the active translocon.</text>
</comment>
<comment type="subcellular location">
    <subcellularLocation>
        <location evidence="1">Cell membrane</location>
        <topology evidence="1">Multi-pass membrane protein</topology>
    </subcellularLocation>
</comment>
<comment type="similarity">
    <text evidence="1">Belongs to the TatC family.</text>
</comment>
<name>TATC_XYLCX</name>
<protein>
    <recommendedName>
        <fullName evidence="1">Sec-independent protein translocase protein TatC</fullName>
    </recommendedName>
</protein>
<organism>
    <name type="scientific">Xylanimonas cellulosilytica (strain DSM 15894 / JCM 12276 / CECT 5975 / KCTC 9989 / LMG 20990 / NBRC 107835 / XIL07)</name>
    <dbReference type="NCBI Taxonomy" id="446471"/>
    <lineage>
        <taxon>Bacteria</taxon>
        <taxon>Bacillati</taxon>
        <taxon>Actinomycetota</taxon>
        <taxon>Actinomycetes</taxon>
        <taxon>Micrococcales</taxon>
        <taxon>Promicromonosporaceae</taxon>
        <taxon>Xylanimonas</taxon>
    </lineage>
</organism>
<gene>
    <name evidence="1" type="primary">tatC</name>
    <name type="ordered locus">Xcel_0071</name>
</gene>
<keyword id="KW-1003">Cell membrane</keyword>
<keyword id="KW-0472">Membrane</keyword>
<keyword id="KW-0653">Protein transport</keyword>
<keyword id="KW-1185">Reference proteome</keyword>
<keyword id="KW-0811">Translocation</keyword>
<keyword id="KW-0812">Transmembrane</keyword>
<keyword id="KW-1133">Transmembrane helix</keyword>
<keyword id="KW-0813">Transport</keyword>